<proteinExistence type="inferred from homology"/>
<protein>
    <recommendedName>
        <fullName evidence="1">Aliphatic sulfonates import ATP-binding protein SsuB</fullName>
        <ecNumber evidence="1">7.6.2.14</ecNumber>
    </recommendedName>
</protein>
<dbReference type="EC" id="7.6.2.14" evidence="1"/>
<dbReference type="EMBL" id="CP000468">
    <property type="protein sequence ID" value="ABJ00350.1"/>
    <property type="molecule type" value="Genomic_DNA"/>
</dbReference>
<dbReference type="RefSeq" id="WP_001090487.1">
    <property type="nucleotide sequence ID" value="NZ_CADILS010000016.1"/>
</dbReference>
<dbReference type="SMR" id="A1A9L0"/>
<dbReference type="KEGG" id="ecv:APECO1_45"/>
<dbReference type="HOGENOM" id="CLU_000604_1_22_6"/>
<dbReference type="Proteomes" id="UP000008216">
    <property type="component" value="Chromosome"/>
</dbReference>
<dbReference type="GO" id="GO:0005886">
    <property type="term" value="C:plasma membrane"/>
    <property type="evidence" value="ECO:0007669"/>
    <property type="project" value="UniProtKB-SubCell"/>
</dbReference>
<dbReference type="GO" id="GO:0005524">
    <property type="term" value="F:ATP binding"/>
    <property type="evidence" value="ECO:0007669"/>
    <property type="project" value="UniProtKB-KW"/>
</dbReference>
<dbReference type="GO" id="GO:0016887">
    <property type="term" value="F:ATP hydrolysis activity"/>
    <property type="evidence" value="ECO:0007669"/>
    <property type="project" value="InterPro"/>
</dbReference>
<dbReference type="CDD" id="cd03293">
    <property type="entry name" value="ABC_NrtD_SsuB_transporters"/>
    <property type="match status" value="1"/>
</dbReference>
<dbReference type="FunFam" id="3.40.50.300:FF:000653">
    <property type="entry name" value="Aliphatic sulfonates import ATP-binding protein SsuB"/>
    <property type="match status" value="1"/>
</dbReference>
<dbReference type="Gene3D" id="3.40.50.300">
    <property type="entry name" value="P-loop containing nucleotide triphosphate hydrolases"/>
    <property type="match status" value="1"/>
</dbReference>
<dbReference type="InterPro" id="IPR003593">
    <property type="entry name" value="AAA+_ATPase"/>
</dbReference>
<dbReference type="InterPro" id="IPR003439">
    <property type="entry name" value="ABC_transporter-like_ATP-bd"/>
</dbReference>
<dbReference type="InterPro" id="IPR017871">
    <property type="entry name" value="ABC_transporter-like_CS"/>
</dbReference>
<dbReference type="InterPro" id="IPR050166">
    <property type="entry name" value="ABC_transporter_ATP-bind"/>
</dbReference>
<dbReference type="InterPro" id="IPR027417">
    <property type="entry name" value="P-loop_NTPase"/>
</dbReference>
<dbReference type="NCBIfam" id="NF008420">
    <property type="entry name" value="PRK11247.1"/>
    <property type="match status" value="1"/>
</dbReference>
<dbReference type="PANTHER" id="PTHR42788:SF17">
    <property type="entry name" value="ALIPHATIC SULFONATES IMPORT ATP-BINDING PROTEIN SSUB"/>
    <property type="match status" value="1"/>
</dbReference>
<dbReference type="PANTHER" id="PTHR42788">
    <property type="entry name" value="TAURINE IMPORT ATP-BINDING PROTEIN-RELATED"/>
    <property type="match status" value="1"/>
</dbReference>
<dbReference type="Pfam" id="PF00005">
    <property type="entry name" value="ABC_tran"/>
    <property type="match status" value="1"/>
</dbReference>
<dbReference type="SMART" id="SM00382">
    <property type="entry name" value="AAA"/>
    <property type="match status" value="1"/>
</dbReference>
<dbReference type="SUPFAM" id="SSF52540">
    <property type="entry name" value="P-loop containing nucleoside triphosphate hydrolases"/>
    <property type="match status" value="1"/>
</dbReference>
<dbReference type="PROSITE" id="PS00211">
    <property type="entry name" value="ABC_TRANSPORTER_1"/>
    <property type="match status" value="1"/>
</dbReference>
<dbReference type="PROSITE" id="PS50893">
    <property type="entry name" value="ABC_TRANSPORTER_2"/>
    <property type="match status" value="1"/>
</dbReference>
<dbReference type="PROSITE" id="PS51291">
    <property type="entry name" value="SSUB"/>
    <property type="match status" value="1"/>
</dbReference>
<sequence>MNTARLNQGTPLLLNAVSKHYAENIVLNQLDLHIPAGQFVAVVGRSGGGKSTLLRLLAGLETPTAGDVLAGTTPLAEIQDDTRMMFQDARLLPWKSVIDNVGLGLKGQWRDAARQALAAVGLENRAGEWPAALSGGQKQRVALARALIHRPGLLLLDEPLGALDALTRLEMQDLIVSLWQEHGFTVLLVTHDVSEAVAMADRVLLIEEGKIGLDLTVDIPRPRRLGSVRLAELEAEVLQRVMQRGHSEQPIRRHG</sequence>
<reference key="1">
    <citation type="journal article" date="2007" name="J. Bacteriol.">
        <title>The genome sequence of avian pathogenic Escherichia coli strain O1:K1:H7 shares strong similarities with human extraintestinal pathogenic E. coli genomes.</title>
        <authorList>
            <person name="Johnson T.J."/>
            <person name="Kariyawasam S."/>
            <person name="Wannemuehler Y."/>
            <person name="Mangiamele P."/>
            <person name="Johnson S.J."/>
            <person name="Doetkott C."/>
            <person name="Skyberg J.A."/>
            <person name="Lynne A.M."/>
            <person name="Johnson J.R."/>
            <person name="Nolan L.K."/>
        </authorList>
    </citation>
    <scope>NUCLEOTIDE SEQUENCE [LARGE SCALE GENOMIC DNA]</scope>
</reference>
<feature type="chain" id="PRO_0000279913" description="Aliphatic sulfonates import ATP-binding protein SsuB">
    <location>
        <begin position="1"/>
        <end position="255"/>
    </location>
</feature>
<feature type="domain" description="ABC transporter" evidence="1">
    <location>
        <begin position="12"/>
        <end position="233"/>
    </location>
</feature>
<feature type="binding site" evidence="1">
    <location>
        <begin position="44"/>
        <end position="51"/>
    </location>
    <ligand>
        <name>ATP</name>
        <dbReference type="ChEBI" id="CHEBI:30616"/>
    </ligand>
</feature>
<name>SSUB_ECOK1</name>
<keyword id="KW-0067">ATP-binding</keyword>
<keyword id="KW-0997">Cell inner membrane</keyword>
<keyword id="KW-1003">Cell membrane</keyword>
<keyword id="KW-0472">Membrane</keyword>
<keyword id="KW-0547">Nucleotide-binding</keyword>
<keyword id="KW-1185">Reference proteome</keyword>
<keyword id="KW-1278">Translocase</keyword>
<keyword id="KW-0813">Transport</keyword>
<gene>
    <name evidence="1" type="primary">ssuB</name>
    <name type="ordered locus">Ecok1_08560</name>
    <name type="ORF">APECO1_45</name>
</gene>
<evidence type="ECO:0000255" key="1">
    <source>
        <dbReference type="HAMAP-Rule" id="MF_01724"/>
    </source>
</evidence>
<organism>
    <name type="scientific">Escherichia coli O1:K1 / APEC</name>
    <dbReference type="NCBI Taxonomy" id="405955"/>
    <lineage>
        <taxon>Bacteria</taxon>
        <taxon>Pseudomonadati</taxon>
        <taxon>Pseudomonadota</taxon>
        <taxon>Gammaproteobacteria</taxon>
        <taxon>Enterobacterales</taxon>
        <taxon>Enterobacteriaceae</taxon>
        <taxon>Escherichia</taxon>
    </lineage>
</organism>
<comment type="function">
    <text evidence="1">Part of the ABC transporter complex SsuABC involved in aliphatic sulfonates import. Responsible for energy coupling to the transport system.</text>
</comment>
<comment type="catalytic activity">
    <reaction evidence="1">
        <text>ATP + H2O + aliphatic sulfonate-[sulfonate-binding protein]Side 1 = ADP + phosphate + aliphatic sulfonateSide 2 + [sulfonate-binding protein]Side 1.</text>
        <dbReference type="EC" id="7.6.2.14"/>
    </reaction>
</comment>
<comment type="subunit">
    <text evidence="1">The complex is composed of two ATP-binding proteins (SsuB), two transmembrane proteins (SsuC) and a solute-binding protein (SsuA).</text>
</comment>
<comment type="subcellular location">
    <subcellularLocation>
        <location evidence="1">Cell inner membrane</location>
        <topology evidence="1">Peripheral membrane protein</topology>
    </subcellularLocation>
</comment>
<comment type="similarity">
    <text evidence="1">Belongs to the ABC transporter superfamily. Aliphatic sulfonates importer (TC 3.A.1.17.2) family.</text>
</comment>
<accession>A1A9L0</accession>